<reference key="1">
    <citation type="journal article" date="2009" name="BMC Microbiol.">
        <title>The genome sequence of Geobacter metallireducens: features of metabolism, physiology and regulation common and dissimilar to Geobacter sulfurreducens.</title>
        <authorList>
            <person name="Aklujkar M."/>
            <person name="Krushkal J."/>
            <person name="DiBartolo G."/>
            <person name="Lapidus A."/>
            <person name="Land M.L."/>
            <person name="Lovley D.R."/>
        </authorList>
    </citation>
    <scope>NUCLEOTIDE SEQUENCE [LARGE SCALE GENOMIC DNA]</scope>
    <source>
        <strain>ATCC 53774 / DSM 7210 / GS-15</strain>
    </source>
</reference>
<evidence type="ECO:0000255" key="1">
    <source>
        <dbReference type="HAMAP-Rule" id="MF_00167"/>
    </source>
</evidence>
<organism>
    <name type="scientific">Geobacter metallireducens (strain ATCC 53774 / DSM 7210 / GS-15)</name>
    <dbReference type="NCBI Taxonomy" id="269799"/>
    <lineage>
        <taxon>Bacteria</taxon>
        <taxon>Pseudomonadati</taxon>
        <taxon>Thermodesulfobacteriota</taxon>
        <taxon>Desulfuromonadia</taxon>
        <taxon>Geobacterales</taxon>
        <taxon>Geobacteraceae</taxon>
        <taxon>Geobacter</taxon>
    </lineage>
</organism>
<dbReference type="EMBL" id="CP000148">
    <property type="protein sequence ID" value="ABB30683.1"/>
    <property type="molecule type" value="Genomic_DNA"/>
</dbReference>
<dbReference type="RefSeq" id="WP_004512412.1">
    <property type="nucleotide sequence ID" value="NC_007517.1"/>
</dbReference>
<dbReference type="SMR" id="Q39YJ1"/>
<dbReference type="STRING" id="269799.Gmet_0440"/>
<dbReference type="KEGG" id="gme:Gmet_0440"/>
<dbReference type="eggNOG" id="COG1551">
    <property type="taxonomic scope" value="Bacteria"/>
</dbReference>
<dbReference type="HOGENOM" id="CLU_164837_0_2_7"/>
<dbReference type="Proteomes" id="UP000007073">
    <property type="component" value="Chromosome"/>
</dbReference>
<dbReference type="GO" id="GO:0005829">
    <property type="term" value="C:cytosol"/>
    <property type="evidence" value="ECO:0007669"/>
    <property type="project" value="TreeGrafter"/>
</dbReference>
<dbReference type="GO" id="GO:0048027">
    <property type="term" value="F:mRNA 5'-UTR binding"/>
    <property type="evidence" value="ECO:0007669"/>
    <property type="project" value="UniProtKB-UniRule"/>
</dbReference>
<dbReference type="GO" id="GO:0044781">
    <property type="term" value="P:bacterial-type flagellum organization"/>
    <property type="evidence" value="ECO:0007669"/>
    <property type="project" value="UniProtKB-KW"/>
</dbReference>
<dbReference type="GO" id="GO:0006402">
    <property type="term" value="P:mRNA catabolic process"/>
    <property type="evidence" value="ECO:0007669"/>
    <property type="project" value="InterPro"/>
</dbReference>
<dbReference type="GO" id="GO:0045947">
    <property type="term" value="P:negative regulation of translational initiation"/>
    <property type="evidence" value="ECO:0007669"/>
    <property type="project" value="UniProtKB-UniRule"/>
</dbReference>
<dbReference type="GO" id="GO:1902208">
    <property type="term" value="P:regulation of bacterial-type flagellum assembly"/>
    <property type="evidence" value="ECO:0007669"/>
    <property type="project" value="UniProtKB-UniRule"/>
</dbReference>
<dbReference type="GO" id="GO:0006109">
    <property type="term" value="P:regulation of carbohydrate metabolic process"/>
    <property type="evidence" value="ECO:0007669"/>
    <property type="project" value="InterPro"/>
</dbReference>
<dbReference type="FunFam" id="2.60.40.4380:FF:000002">
    <property type="entry name" value="Translational regulator CsrA"/>
    <property type="match status" value="1"/>
</dbReference>
<dbReference type="Gene3D" id="2.60.40.4380">
    <property type="entry name" value="Translational regulator CsrA"/>
    <property type="match status" value="1"/>
</dbReference>
<dbReference type="HAMAP" id="MF_00167">
    <property type="entry name" value="CsrA"/>
    <property type="match status" value="1"/>
</dbReference>
<dbReference type="InterPro" id="IPR003751">
    <property type="entry name" value="CsrA"/>
</dbReference>
<dbReference type="InterPro" id="IPR036107">
    <property type="entry name" value="CsrA_sf"/>
</dbReference>
<dbReference type="NCBIfam" id="TIGR00202">
    <property type="entry name" value="csrA"/>
    <property type="match status" value="1"/>
</dbReference>
<dbReference type="NCBIfam" id="NF002469">
    <property type="entry name" value="PRK01712.1"/>
    <property type="match status" value="1"/>
</dbReference>
<dbReference type="PANTHER" id="PTHR34984">
    <property type="entry name" value="CARBON STORAGE REGULATOR"/>
    <property type="match status" value="1"/>
</dbReference>
<dbReference type="PANTHER" id="PTHR34984:SF1">
    <property type="entry name" value="CARBON STORAGE REGULATOR"/>
    <property type="match status" value="1"/>
</dbReference>
<dbReference type="Pfam" id="PF02599">
    <property type="entry name" value="CsrA"/>
    <property type="match status" value="1"/>
</dbReference>
<dbReference type="SUPFAM" id="SSF117130">
    <property type="entry name" value="CsrA-like"/>
    <property type="match status" value="1"/>
</dbReference>
<accession>Q39YJ1</accession>
<protein>
    <recommendedName>
        <fullName evidence="1">Translational regulator CsrA</fullName>
    </recommendedName>
</protein>
<gene>
    <name evidence="1" type="primary">csrA</name>
    <name type="ordered locus">Gmet_0440</name>
</gene>
<sequence>MLVLTRKMGETITIGDQIRIKVVEMKGNQVRLGIEAPGDMRIYREEIYLKVQKENQLAAAWSLEDLESAVNFAGAGKE</sequence>
<proteinExistence type="inferred from homology"/>
<feature type="chain" id="PRO_1000023384" description="Translational regulator CsrA">
    <location>
        <begin position="1"/>
        <end position="78"/>
    </location>
</feature>
<comment type="function">
    <text evidence="1">A translational regulator that binds mRNA to regulate translation initiation and/or mRNA stability. Usually binds in the 5'-UTR at or near the Shine-Dalgarno sequence preventing ribosome-binding, thus repressing translation. Its main target seems to be the major flagellin gene, while its function is anatagonized by FliW.</text>
</comment>
<comment type="subunit">
    <text evidence="1">Homodimer; the beta-strands of each monomer intercalate to form a hydrophobic core, while the alpha-helices form wings that extend away from the core.</text>
</comment>
<comment type="subcellular location">
    <subcellularLocation>
        <location evidence="1">Cytoplasm</location>
    </subcellularLocation>
</comment>
<comment type="similarity">
    <text evidence="1">Belongs to the CsrA/RsmA family.</text>
</comment>
<keyword id="KW-1005">Bacterial flagellum biogenesis</keyword>
<keyword id="KW-0963">Cytoplasm</keyword>
<keyword id="KW-1185">Reference proteome</keyword>
<keyword id="KW-0678">Repressor</keyword>
<keyword id="KW-0694">RNA-binding</keyword>
<keyword id="KW-0810">Translation regulation</keyword>
<name>CSRA_GEOMG</name>